<dbReference type="EC" id="3.5.4.25" evidence="1"/>
<dbReference type="EMBL" id="AM421808">
    <property type="protein sequence ID" value="CAM10403.1"/>
    <property type="molecule type" value="Genomic_DNA"/>
</dbReference>
<dbReference type="RefSeq" id="WP_002220947.1">
    <property type="nucleotide sequence ID" value="NC_008767.1"/>
</dbReference>
<dbReference type="SMR" id="A1KU62"/>
<dbReference type="GeneID" id="93385976"/>
<dbReference type="KEGG" id="nmc:NMC1155"/>
<dbReference type="HOGENOM" id="CLU_020273_2_1_4"/>
<dbReference type="UniPathway" id="UPA00275">
    <property type="reaction ID" value="UER00400"/>
</dbReference>
<dbReference type="Proteomes" id="UP000002286">
    <property type="component" value="Chromosome"/>
</dbReference>
<dbReference type="GO" id="GO:0005829">
    <property type="term" value="C:cytosol"/>
    <property type="evidence" value="ECO:0007669"/>
    <property type="project" value="TreeGrafter"/>
</dbReference>
<dbReference type="GO" id="GO:0005525">
    <property type="term" value="F:GTP binding"/>
    <property type="evidence" value="ECO:0007669"/>
    <property type="project" value="UniProtKB-KW"/>
</dbReference>
<dbReference type="GO" id="GO:0003935">
    <property type="term" value="F:GTP cyclohydrolase II activity"/>
    <property type="evidence" value="ECO:0007669"/>
    <property type="project" value="UniProtKB-UniRule"/>
</dbReference>
<dbReference type="GO" id="GO:0008270">
    <property type="term" value="F:zinc ion binding"/>
    <property type="evidence" value="ECO:0007669"/>
    <property type="project" value="UniProtKB-UniRule"/>
</dbReference>
<dbReference type="GO" id="GO:0009231">
    <property type="term" value="P:riboflavin biosynthetic process"/>
    <property type="evidence" value="ECO:0007669"/>
    <property type="project" value="UniProtKB-UniRule"/>
</dbReference>
<dbReference type="CDD" id="cd00641">
    <property type="entry name" value="GTP_cyclohydro2"/>
    <property type="match status" value="1"/>
</dbReference>
<dbReference type="FunFam" id="3.40.50.10990:FF:000002">
    <property type="entry name" value="GTP cyclohydrolase-2"/>
    <property type="match status" value="1"/>
</dbReference>
<dbReference type="Gene3D" id="3.40.50.10990">
    <property type="entry name" value="GTP cyclohydrolase II"/>
    <property type="match status" value="1"/>
</dbReference>
<dbReference type="HAMAP" id="MF_00179">
    <property type="entry name" value="RibA"/>
    <property type="match status" value="1"/>
</dbReference>
<dbReference type="InterPro" id="IPR032677">
    <property type="entry name" value="GTP_cyclohydro_II"/>
</dbReference>
<dbReference type="InterPro" id="IPR000926">
    <property type="entry name" value="RibA"/>
</dbReference>
<dbReference type="InterPro" id="IPR036144">
    <property type="entry name" value="RibA-like_sf"/>
</dbReference>
<dbReference type="NCBIfam" id="NF001591">
    <property type="entry name" value="PRK00393.1"/>
    <property type="match status" value="1"/>
</dbReference>
<dbReference type="NCBIfam" id="TIGR00505">
    <property type="entry name" value="ribA"/>
    <property type="match status" value="1"/>
</dbReference>
<dbReference type="PANTHER" id="PTHR21327:SF18">
    <property type="entry name" value="3,4-DIHYDROXY-2-BUTANONE 4-PHOSPHATE SYNTHASE"/>
    <property type="match status" value="1"/>
</dbReference>
<dbReference type="PANTHER" id="PTHR21327">
    <property type="entry name" value="GTP CYCLOHYDROLASE II-RELATED"/>
    <property type="match status" value="1"/>
</dbReference>
<dbReference type="Pfam" id="PF00925">
    <property type="entry name" value="GTP_cyclohydro2"/>
    <property type="match status" value="1"/>
</dbReference>
<dbReference type="SUPFAM" id="SSF142695">
    <property type="entry name" value="RibA-like"/>
    <property type="match status" value="1"/>
</dbReference>
<name>RIBA_NEIMF</name>
<gene>
    <name evidence="1" type="primary">ribA</name>
    <name type="ordered locus">NMC1155</name>
</gene>
<sequence length="197" mass="21930">MSEMLNHVASCRLPTEWGVFTMHGFEEANGQEHVALTVGNFSDGNPVLTRIHSECLTGDALFSRKCDCGPQLEAAMRAVQTEGRGIIVYLRQEGRGIGLINKIRAYHLQDQGMDTVEANLALGLPVDARDFRLAQSIYEYLGIRSVKLLTNNPEKIQTLKDAGINVVERIPLHVGENLENKRYLQTKADKLGHLMSE</sequence>
<proteinExistence type="inferred from homology"/>
<protein>
    <recommendedName>
        <fullName evidence="1">GTP cyclohydrolase-2</fullName>
        <ecNumber evidence="1">3.5.4.25</ecNumber>
    </recommendedName>
    <alternativeName>
        <fullName evidence="1">GTP cyclohydrolase II</fullName>
    </alternativeName>
</protein>
<reference key="1">
    <citation type="journal article" date="2007" name="PLoS Genet.">
        <title>Meningococcal genetic variation mechanisms viewed through comparative analysis of serogroup C strain FAM18.</title>
        <authorList>
            <person name="Bentley S.D."/>
            <person name="Vernikos G.S."/>
            <person name="Snyder L.A.S."/>
            <person name="Churcher C."/>
            <person name="Arrowsmith C."/>
            <person name="Chillingworth T."/>
            <person name="Cronin A."/>
            <person name="Davis P.H."/>
            <person name="Holroyd N.E."/>
            <person name="Jagels K."/>
            <person name="Maddison M."/>
            <person name="Moule S."/>
            <person name="Rabbinowitsch E."/>
            <person name="Sharp S."/>
            <person name="Unwin L."/>
            <person name="Whitehead S."/>
            <person name="Quail M.A."/>
            <person name="Achtman M."/>
            <person name="Barrell B.G."/>
            <person name="Saunders N.J."/>
            <person name="Parkhill J."/>
        </authorList>
    </citation>
    <scope>NUCLEOTIDE SEQUENCE [LARGE SCALE GENOMIC DNA]</scope>
    <source>
        <strain>ATCC 700532 / DSM 15464 / FAM18</strain>
    </source>
</reference>
<evidence type="ECO:0000255" key="1">
    <source>
        <dbReference type="HAMAP-Rule" id="MF_00179"/>
    </source>
</evidence>
<organism>
    <name type="scientific">Neisseria meningitidis serogroup C / serotype 2a (strain ATCC 700532 / DSM 15464 / FAM18)</name>
    <dbReference type="NCBI Taxonomy" id="272831"/>
    <lineage>
        <taxon>Bacteria</taxon>
        <taxon>Pseudomonadati</taxon>
        <taxon>Pseudomonadota</taxon>
        <taxon>Betaproteobacteria</taxon>
        <taxon>Neisseriales</taxon>
        <taxon>Neisseriaceae</taxon>
        <taxon>Neisseria</taxon>
    </lineage>
</organism>
<keyword id="KW-0342">GTP-binding</keyword>
<keyword id="KW-0378">Hydrolase</keyword>
<keyword id="KW-0479">Metal-binding</keyword>
<keyword id="KW-0547">Nucleotide-binding</keyword>
<keyword id="KW-0686">Riboflavin biosynthesis</keyword>
<keyword id="KW-0862">Zinc</keyword>
<comment type="function">
    <text evidence="1">Catalyzes the conversion of GTP to 2,5-diamino-6-ribosylamino-4(3H)-pyrimidinone 5'-phosphate (DARP), formate and pyrophosphate.</text>
</comment>
<comment type="catalytic activity">
    <reaction evidence="1">
        <text>GTP + 4 H2O = 2,5-diamino-6-hydroxy-4-(5-phosphoribosylamino)-pyrimidine + formate + 2 phosphate + 3 H(+)</text>
        <dbReference type="Rhea" id="RHEA:23704"/>
        <dbReference type="ChEBI" id="CHEBI:15377"/>
        <dbReference type="ChEBI" id="CHEBI:15378"/>
        <dbReference type="ChEBI" id="CHEBI:15740"/>
        <dbReference type="ChEBI" id="CHEBI:37565"/>
        <dbReference type="ChEBI" id="CHEBI:43474"/>
        <dbReference type="ChEBI" id="CHEBI:58614"/>
        <dbReference type="EC" id="3.5.4.25"/>
    </reaction>
</comment>
<comment type="cofactor">
    <cofactor evidence="1">
        <name>Zn(2+)</name>
        <dbReference type="ChEBI" id="CHEBI:29105"/>
    </cofactor>
    <text evidence="1">Binds 1 zinc ion per subunit.</text>
</comment>
<comment type="pathway">
    <text evidence="1">Cofactor biosynthesis; riboflavin biosynthesis; 5-amino-6-(D-ribitylamino)uracil from GTP: step 1/4.</text>
</comment>
<comment type="similarity">
    <text evidence="1">Belongs to the GTP cyclohydrolase II family.</text>
</comment>
<feature type="chain" id="PRO_1000040571" description="GTP cyclohydrolase-2">
    <location>
        <begin position="1"/>
        <end position="197"/>
    </location>
</feature>
<feature type="active site" description="Proton acceptor" evidence="1">
    <location>
        <position position="127"/>
    </location>
</feature>
<feature type="active site" description="Nucleophile" evidence="1">
    <location>
        <position position="129"/>
    </location>
</feature>
<feature type="binding site" evidence="1">
    <location>
        <begin position="50"/>
        <end position="54"/>
    </location>
    <ligand>
        <name>GTP</name>
        <dbReference type="ChEBI" id="CHEBI:37565"/>
    </ligand>
</feature>
<feature type="binding site" evidence="1">
    <location>
        <position position="55"/>
    </location>
    <ligand>
        <name>Zn(2+)</name>
        <dbReference type="ChEBI" id="CHEBI:29105"/>
        <note>catalytic</note>
    </ligand>
</feature>
<feature type="binding site" evidence="1">
    <location>
        <position position="66"/>
    </location>
    <ligand>
        <name>Zn(2+)</name>
        <dbReference type="ChEBI" id="CHEBI:29105"/>
        <note>catalytic</note>
    </ligand>
</feature>
<feature type="binding site" evidence="1">
    <location>
        <position position="68"/>
    </location>
    <ligand>
        <name>Zn(2+)</name>
        <dbReference type="ChEBI" id="CHEBI:29105"/>
        <note>catalytic</note>
    </ligand>
</feature>
<feature type="binding site" evidence="1">
    <location>
        <position position="71"/>
    </location>
    <ligand>
        <name>GTP</name>
        <dbReference type="ChEBI" id="CHEBI:37565"/>
    </ligand>
</feature>
<feature type="binding site" evidence="1">
    <location>
        <begin position="93"/>
        <end position="95"/>
    </location>
    <ligand>
        <name>GTP</name>
        <dbReference type="ChEBI" id="CHEBI:37565"/>
    </ligand>
</feature>
<feature type="binding site" evidence="1">
    <location>
        <position position="115"/>
    </location>
    <ligand>
        <name>GTP</name>
        <dbReference type="ChEBI" id="CHEBI:37565"/>
    </ligand>
</feature>
<feature type="binding site" evidence="1">
    <location>
        <position position="150"/>
    </location>
    <ligand>
        <name>GTP</name>
        <dbReference type="ChEBI" id="CHEBI:37565"/>
    </ligand>
</feature>
<feature type="binding site" evidence="1">
    <location>
        <position position="155"/>
    </location>
    <ligand>
        <name>GTP</name>
        <dbReference type="ChEBI" id="CHEBI:37565"/>
    </ligand>
</feature>
<accession>A1KU62</accession>